<organism>
    <name type="scientific">Felis catus</name>
    <name type="common">Cat</name>
    <name type="synonym">Felis silvestris catus</name>
    <dbReference type="NCBI Taxonomy" id="9685"/>
    <lineage>
        <taxon>Eukaryota</taxon>
        <taxon>Metazoa</taxon>
        <taxon>Chordata</taxon>
        <taxon>Craniata</taxon>
        <taxon>Vertebrata</taxon>
        <taxon>Euteleostomi</taxon>
        <taxon>Mammalia</taxon>
        <taxon>Eutheria</taxon>
        <taxon>Laurasiatheria</taxon>
        <taxon>Carnivora</taxon>
        <taxon>Feliformia</taxon>
        <taxon>Felidae</taxon>
        <taxon>Felinae</taxon>
        <taxon>Felis</taxon>
    </lineage>
</organism>
<name>G6PC1_FELCA</name>
<accession>Q19KA1</accession>
<gene>
    <name type="primary">G6PC1</name>
    <name type="synonym">G6PC</name>
</gene>
<keyword id="KW-0256">Endoplasmic reticulum</keyword>
<keyword id="KW-0312">Gluconeogenesis</keyword>
<keyword id="KW-0325">Glycoprotein</keyword>
<keyword id="KW-0378">Hydrolase</keyword>
<keyword id="KW-0472">Membrane</keyword>
<keyword id="KW-1185">Reference proteome</keyword>
<keyword id="KW-0812">Transmembrane</keyword>
<keyword id="KW-1133">Transmembrane helix</keyword>
<evidence type="ECO:0000250" key="1">
    <source>
        <dbReference type="UniProtKB" id="P35575"/>
    </source>
</evidence>
<evidence type="ECO:0000255" key="2"/>
<evidence type="ECO:0000305" key="3"/>
<protein>
    <recommendedName>
        <fullName>Glucose-6-phosphatase catalytic subunit 1</fullName>
        <ecNumber evidence="1">3.1.3.9</ecNumber>
    </recommendedName>
    <alternativeName>
        <fullName>Glucose-6-phosphatase</fullName>
        <shortName>G-6-Pase</shortName>
        <shortName>G6Pase</shortName>
    </alternativeName>
</protein>
<reference key="1">
    <citation type="journal article" date="2008" name="DNA Seq.">
        <title>Cloning and comparative bioinformatic analysis of feline glucose-6-phosphatase catalytic subunit cDNA.</title>
        <authorList>
            <person name="Lindbloom S."/>
            <person name="LeCluyse M."/>
            <person name="Schermerhorn T."/>
        </authorList>
    </citation>
    <scope>NUCLEOTIDE SEQUENCE [MRNA]</scope>
</reference>
<dbReference type="EC" id="3.1.3.9" evidence="1"/>
<dbReference type="EMBL" id="DQ525410">
    <property type="protein sequence ID" value="ABF82030.1"/>
    <property type="molecule type" value="mRNA"/>
</dbReference>
<dbReference type="RefSeq" id="NP_001035837.1">
    <property type="nucleotide sequence ID" value="NM_001042378.1"/>
</dbReference>
<dbReference type="STRING" id="9685.ENSFCAP00000025827"/>
<dbReference type="GlyCosmos" id="Q19KA1">
    <property type="glycosylation" value="1 site, No reported glycans"/>
</dbReference>
<dbReference type="PaxDb" id="9685-ENSFCAP00000012186"/>
<dbReference type="Ensembl" id="ENSFCAT00000047985.3">
    <property type="protein sequence ID" value="ENSFCAP00000025827.1"/>
    <property type="gene ID" value="ENSFCAG00000036883.3"/>
</dbReference>
<dbReference type="GeneID" id="723970"/>
<dbReference type="KEGG" id="fca:723970"/>
<dbReference type="CTD" id="2538"/>
<dbReference type="VGNC" id="VGNC:99060">
    <property type="gene designation" value="G6PC1"/>
</dbReference>
<dbReference type="eggNOG" id="ENOG502QS9B">
    <property type="taxonomic scope" value="Eukaryota"/>
</dbReference>
<dbReference type="GeneTree" id="ENSGT00950000183150"/>
<dbReference type="HOGENOM" id="CLU_052517_0_0_1"/>
<dbReference type="InParanoid" id="Q19KA1"/>
<dbReference type="OMA" id="WCEHPEW"/>
<dbReference type="OrthoDB" id="6416209at2759"/>
<dbReference type="TreeFam" id="TF324388"/>
<dbReference type="BRENDA" id="3.1.3.9">
    <property type="organism ID" value="2235"/>
</dbReference>
<dbReference type="UniPathway" id="UPA00138"/>
<dbReference type="Proteomes" id="UP000011712">
    <property type="component" value="Chromosome E1"/>
</dbReference>
<dbReference type="Bgee" id="ENSFCAG00000036883">
    <property type="expression patterns" value="Expressed in liver and 2 other cell types or tissues"/>
</dbReference>
<dbReference type="GO" id="GO:0005789">
    <property type="term" value="C:endoplasmic reticulum membrane"/>
    <property type="evidence" value="ECO:0007669"/>
    <property type="project" value="UniProtKB-SubCell"/>
</dbReference>
<dbReference type="GO" id="GO:0016020">
    <property type="term" value="C:membrane"/>
    <property type="evidence" value="ECO:0000318"/>
    <property type="project" value="GO_Central"/>
</dbReference>
<dbReference type="GO" id="GO:0004346">
    <property type="term" value="F:glucose-6-phosphatase activity"/>
    <property type="evidence" value="ECO:0000318"/>
    <property type="project" value="GO_Central"/>
</dbReference>
<dbReference type="GO" id="GO:0042301">
    <property type="term" value="F:phosphate ion binding"/>
    <property type="evidence" value="ECO:0007669"/>
    <property type="project" value="Ensembl"/>
</dbReference>
<dbReference type="GO" id="GO:0016773">
    <property type="term" value="F:phosphotransferase activity, alcohol group as acceptor"/>
    <property type="evidence" value="ECO:0007669"/>
    <property type="project" value="Ensembl"/>
</dbReference>
<dbReference type="GO" id="GO:0042632">
    <property type="term" value="P:cholesterol homeostasis"/>
    <property type="evidence" value="ECO:0007669"/>
    <property type="project" value="Ensembl"/>
</dbReference>
<dbReference type="GO" id="GO:0006094">
    <property type="term" value="P:gluconeogenesis"/>
    <property type="evidence" value="ECO:0000318"/>
    <property type="project" value="GO_Central"/>
</dbReference>
<dbReference type="GO" id="GO:0051156">
    <property type="term" value="P:glucose 6-phosphate metabolic process"/>
    <property type="evidence" value="ECO:0000318"/>
    <property type="project" value="GO_Central"/>
</dbReference>
<dbReference type="GO" id="GO:0042593">
    <property type="term" value="P:glucose homeostasis"/>
    <property type="evidence" value="ECO:0007669"/>
    <property type="project" value="Ensembl"/>
</dbReference>
<dbReference type="GO" id="GO:0015760">
    <property type="term" value="P:glucose-6-phosphate transport"/>
    <property type="evidence" value="ECO:0007669"/>
    <property type="project" value="Ensembl"/>
</dbReference>
<dbReference type="GO" id="GO:0005980">
    <property type="term" value="P:glycogen catabolic process"/>
    <property type="evidence" value="ECO:0007669"/>
    <property type="project" value="Ensembl"/>
</dbReference>
<dbReference type="GO" id="GO:0035264">
    <property type="term" value="P:multicellular organism growth"/>
    <property type="evidence" value="ECO:0007669"/>
    <property type="project" value="Ensembl"/>
</dbReference>
<dbReference type="GO" id="GO:0010468">
    <property type="term" value="P:regulation of gene expression"/>
    <property type="evidence" value="ECO:0007669"/>
    <property type="project" value="Ensembl"/>
</dbReference>
<dbReference type="GO" id="GO:0008202">
    <property type="term" value="P:steroid metabolic process"/>
    <property type="evidence" value="ECO:0007669"/>
    <property type="project" value="Ensembl"/>
</dbReference>
<dbReference type="GO" id="GO:0006641">
    <property type="term" value="P:triglyceride metabolic process"/>
    <property type="evidence" value="ECO:0007669"/>
    <property type="project" value="Ensembl"/>
</dbReference>
<dbReference type="GO" id="GO:0046415">
    <property type="term" value="P:urate metabolic process"/>
    <property type="evidence" value="ECO:0007669"/>
    <property type="project" value="Ensembl"/>
</dbReference>
<dbReference type="CDD" id="cd03381">
    <property type="entry name" value="PAP2_glucose_6_phosphatase"/>
    <property type="match status" value="1"/>
</dbReference>
<dbReference type="FunFam" id="1.20.144.10:FF:000010">
    <property type="entry name" value="Glucose-6-phosphatase"/>
    <property type="match status" value="1"/>
</dbReference>
<dbReference type="Gene3D" id="1.20.144.10">
    <property type="entry name" value="Phosphatidic acid phosphatase type 2/haloperoxidase"/>
    <property type="match status" value="1"/>
</dbReference>
<dbReference type="InterPro" id="IPR016275">
    <property type="entry name" value="Glucose-6-phosphatase"/>
</dbReference>
<dbReference type="InterPro" id="IPR036938">
    <property type="entry name" value="P_Acid_Pase_2/haloperoxi_sf"/>
</dbReference>
<dbReference type="InterPro" id="IPR000326">
    <property type="entry name" value="P_Acid_Pase_2/haloperoxidase"/>
</dbReference>
<dbReference type="PANTHER" id="PTHR12591">
    <property type="entry name" value="GLUCOSE-6-PHOSPHATASE"/>
    <property type="match status" value="1"/>
</dbReference>
<dbReference type="PANTHER" id="PTHR12591:SF3">
    <property type="entry name" value="GLUCOSE-6-PHOSPHATASE CATALYTIC SUBUNIT 1"/>
    <property type="match status" value="1"/>
</dbReference>
<dbReference type="Pfam" id="PF01569">
    <property type="entry name" value="PAP2"/>
    <property type="match status" value="1"/>
</dbReference>
<dbReference type="PIRSF" id="PIRSF000905">
    <property type="entry name" value="Glucose-6-phosphatase"/>
    <property type="match status" value="1"/>
</dbReference>
<dbReference type="SMART" id="SM00014">
    <property type="entry name" value="acidPPc"/>
    <property type="match status" value="1"/>
</dbReference>
<dbReference type="SUPFAM" id="SSF48317">
    <property type="entry name" value="Acid phosphatase/Vanadium-dependent haloperoxidase"/>
    <property type="match status" value="1"/>
</dbReference>
<sequence>MEKGMNVLHDFGIQSTHYLQVNYQDSQDWFILVSVIADLRNAFYVLFPIWFHLREAVGIKLLWVAVIGDWLNLVFKWILFGQRPYWWVMDTDYYSNASVPLIKQFPVTCETGPGSPSGHAMGTAGVYYVMVTSTLSMFRGKKKPTYRFRCLNVILWLGFWAVQLNVCLSRIYLAAHFPHQVVAGVLSGIAVAETFRHIQSIYNASLKKYFFITFFLLSFAIGFYLLLKGLGVDLLWTLEKARRWCERPEWVHIDTTPFASLLKNVGTLFGLGLALNSSMYRESCKGTLSKWFPFRLSCIVVSLILLHLFDSLKPPSQIELIFYVLSFCKSAAVPLASVSLIPYCLARVLGQPDKKSL</sequence>
<proteinExistence type="evidence at transcript level"/>
<comment type="function">
    <text evidence="1">Hydrolyzes glucose-6-phosphate to glucose in the endoplasmic reticulum. Forms with the glucose-6-phosphate transporter (SLC37A4/G6PT) the complex responsible for glucose production in the terminal step of glycogenolysis and gluconeogenesis. Hence, it is the key enzyme in homeostatic regulation of blood glucose levels.</text>
</comment>
<comment type="catalytic activity">
    <reaction evidence="1">
        <text>D-glucose 6-phosphate + H2O = D-glucose + phosphate</text>
        <dbReference type="Rhea" id="RHEA:16689"/>
        <dbReference type="ChEBI" id="CHEBI:4167"/>
        <dbReference type="ChEBI" id="CHEBI:15377"/>
        <dbReference type="ChEBI" id="CHEBI:43474"/>
        <dbReference type="ChEBI" id="CHEBI:61548"/>
        <dbReference type="EC" id="3.1.3.9"/>
    </reaction>
</comment>
<comment type="pathway">
    <text evidence="1">Carbohydrate biosynthesis; gluconeogenesis.</text>
</comment>
<comment type="subcellular location">
    <subcellularLocation>
        <location evidence="1">Endoplasmic reticulum membrane</location>
        <topology evidence="2">Multi-pass membrane protein</topology>
    </subcellularLocation>
</comment>
<comment type="similarity">
    <text evidence="3">Belongs to the glucose-6-phosphatase family.</text>
</comment>
<feature type="chain" id="PRO_0000350563" description="Glucose-6-phosphatase catalytic subunit 1">
    <location>
        <begin position="1"/>
        <end position="357"/>
    </location>
</feature>
<feature type="topological domain" description="Lumenal" evidence="1">
    <location>
        <begin position="1"/>
        <end position="28"/>
    </location>
</feature>
<feature type="transmembrane region" description="Helical" evidence="2">
    <location>
        <begin position="29"/>
        <end position="49"/>
    </location>
</feature>
<feature type="topological domain" description="Cytoplasmic" evidence="1">
    <location>
        <begin position="50"/>
        <end position="60"/>
    </location>
</feature>
<feature type="transmembrane region" description="Helical" evidence="2">
    <location>
        <begin position="61"/>
        <end position="81"/>
    </location>
</feature>
<feature type="topological domain" description="Lumenal" evidence="1">
    <location>
        <begin position="82"/>
        <end position="117"/>
    </location>
</feature>
<feature type="transmembrane region" description="Helical" evidence="2">
    <location>
        <begin position="118"/>
        <end position="138"/>
    </location>
</feature>
<feature type="topological domain" description="Cytoplasmic" evidence="1">
    <location>
        <begin position="139"/>
        <end position="147"/>
    </location>
</feature>
<feature type="transmembrane region" description="Helical" evidence="2">
    <location>
        <begin position="148"/>
        <end position="168"/>
    </location>
</feature>
<feature type="topological domain" description="Lumenal" evidence="1">
    <location>
        <begin position="169"/>
        <end position="170"/>
    </location>
</feature>
<feature type="transmembrane region" description="Helical" evidence="2">
    <location>
        <begin position="171"/>
        <end position="191"/>
    </location>
</feature>
<feature type="topological domain" description="Cytoplasmic" evidence="1">
    <location>
        <begin position="192"/>
        <end position="209"/>
    </location>
</feature>
<feature type="transmembrane region" description="Helical" evidence="2">
    <location>
        <begin position="210"/>
        <end position="230"/>
    </location>
</feature>
<feature type="topological domain" description="Lumenal" evidence="1">
    <location>
        <begin position="231"/>
        <end position="254"/>
    </location>
</feature>
<feature type="transmembrane region" description="Helical" evidence="2">
    <location>
        <begin position="255"/>
        <end position="275"/>
    </location>
</feature>
<feature type="topological domain" description="Cytoplasmic" evidence="1">
    <location>
        <begin position="276"/>
        <end position="291"/>
    </location>
</feature>
<feature type="transmembrane region" description="Helical" evidence="2">
    <location>
        <begin position="292"/>
        <end position="312"/>
    </location>
</feature>
<feature type="topological domain" description="Lumenal" evidence="1">
    <location>
        <begin position="313"/>
        <end position="320"/>
    </location>
</feature>
<feature type="transmembrane region" description="Helical" evidence="2">
    <location>
        <begin position="321"/>
        <end position="341"/>
    </location>
</feature>
<feature type="topological domain" description="Cytoplasmic" evidence="1">
    <location>
        <begin position="342"/>
        <end position="357"/>
    </location>
</feature>
<feature type="short sequence motif" description="Prevents secretion from ER" evidence="2">
    <location>
        <begin position="354"/>
        <end position="357"/>
    </location>
</feature>
<feature type="active site" description="Proton donor" evidence="2">
    <location>
        <position position="119"/>
    </location>
</feature>
<feature type="active site" description="Nucleophile" evidence="1">
    <location>
        <position position="176"/>
    </location>
</feature>
<feature type="binding site" evidence="2">
    <location>
        <position position="83"/>
    </location>
    <ligand>
        <name>substrate</name>
    </ligand>
</feature>
<feature type="binding site" evidence="2">
    <location>
        <position position="170"/>
    </location>
    <ligand>
        <name>substrate</name>
    </ligand>
</feature>
<feature type="glycosylation site" description="N-linked (GlcNAc...) asparagine" evidence="2">
    <location>
        <position position="96"/>
    </location>
</feature>